<sequence>MKTDTPSLETPQAARLRRRQLIRQLLERDKTPLAILFMAAVVGTLVGLAAVAFDKGVAWLQNQRMGALVHTADNYPLLLTVAFLCSAVLAMFGYFLVRKYAPEAGGSGIPEIEGALEDQRPVRWWRVLPVKFFGGLGTLGGGMGLGREGPTVQIGGNISRMVLDIFRLKGDEARHTLLATGAAAGLAAAFNAPLAGILFIIEEMRPQFRYTLISIKAVFIGVIMSTIMYRIFNHEVALIDVGKLSDAPLNTLWLYLILGIIFGIFGPIFNKWVLGMQDLLHRVHGGNITKWVLMGGAIGGLCGLLGFVAPATSGGGFNLIPIATAGNFSMGMLVFIFVARVITTLLCFSSGAPGGIFAPMLALGTVLGTAFGMVAVELFPQYHLEAGTFAIAGMGALLAASIRAPLTGIILVLEMTDNYQLILPMIITGLGATLLAQFTGGKPLYSAILARTLAKQEAEQLARSKAASASENT</sequence>
<organism>
    <name type="scientific">Shigella flexneri</name>
    <dbReference type="NCBI Taxonomy" id="623"/>
    <lineage>
        <taxon>Bacteria</taxon>
        <taxon>Pseudomonadati</taxon>
        <taxon>Pseudomonadota</taxon>
        <taxon>Gammaproteobacteria</taxon>
        <taxon>Enterobacterales</taxon>
        <taxon>Enterobacteriaceae</taxon>
        <taxon>Shigella</taxon>
    </lineage>
</organism>
<gene>
    <name evidence="1" type="primary">clcA</name>
    <name evidence="1" type="synonym">eriC</name>
    <name type="ordered locus">SF0147</name>
    <name type="ordered locus">S0150</name>
</gene>
<protein>
    <recommendedName>
        <fullName evidence="1">H(+)/Cl(-) exchange transporter ClcA</fullName>
    </recommendedName>
</protein>
<keyword id="KW-0050">Antiport</keyword>
<keyword id="KW-0997">Cell inner membrane</keyword>
<keyword id="KW-1003">Cell membrane</keyword>
<keyword id="KW-0868">Chloride</keyword>
<keyword id="KW-0406">Ion transport</keyword>
<keyword id="KW-0472">Membrane</keyword>
<keyword id="KW-1185">Reference proteome</keyword>
<keyword id="KW-0812">Transmembrane</keyword>
<keyword id="KW-1133">Transmembrane helix</keyword>
<keyword id="KW-0813">Transport</keyword>
<comment type="function">
    <text evidence="1">Proton-coupled chloride transporter. Functions as antiport system and exchanges two chloride ions for 1 proton. Probably acts as an electrical shunt for an outwardly-directed proton pump that is linked to amino acid decarboxylation, as part of the extreme acid resistance (XAR) response.</text>
</comment>
<comment type="catalytic activity">
    <reaction evidence="1">
        <text>2 chloride(in) + H(+)(out) = 2 chloride(out) + H(+)(in)</text>
        <dbReference type="Rhea" id="RHEA:29567"/>
        <dbReference type="ChEBI" id="CHEBI:15378"/>
        <dbReference type="ChEBI" id="CHEBI:17996"/>
    </reaction>
</comment>
<comment type="subunit">
    <text evidence="1">Homodimer.</text>
</comment>
<comment type="subcellular location">
    <subcellularLocation>
        <location evidence="1">Cell inner membrane</location>
        <topology evidence="1">Multi-pass membrane protein</topology>
    </subcellularLocation>
</comment>
<comment type="similarity">
    <text evidence="1">Belongs to the chloride channel (TC 2.A.49) family. ClcA subfamily.</text>
</comment>
<dbReference type="EMBL" id="AE005674">
    <property type="protein sequence ID" value="AAN41810.1"/>
    <property type="molecule type" value="Genomic_DNA"/>
</dbReference>
<dbReference type="EMBL" id="AE014073">
    <property type="protein sequence ID" value="AAP15691.1"/>
    <property type="molecule type" value="Genomic_DNA"/>
</dbReference>
<dbReference type="RefSeq" id="WP_000845386.1">
    <property type="nucleotide sequence ID" value="NZ_WPGW01000006.1"/>
</dbReference>
<dbReference type="SMR" id="P59639"/>
<dbReference type="STRING" id="198214.SF0147"/>
<dbReference type="PaxDb" id="198214-SF0147"/>
<dbReference type="KEGG" id="sfl:SF0147"/>
<dbReference type="KEGG" id="sfx:S0150"/>
<dbReference type="PATRIC" id="fig|198214.7.peg.165"/>
<dbReference type="HOGENOM" id="CLU_015263_7_0_6"/>
<dbReference type="Proteomes" id="UP000001006">
    <property type="component" value="Chromosome"/>
</dbReference>
<dbReference type="Proteomes" id="UP000002673">
    <property type="component" value="Chromosome"/>
</dbReference>
<dbReference type="GO" id="GO:0005886">
    <property type="term" value="C:plasma membrane"/>
    <property type="evidence" value="ECO:0007669"/>
    <property type="project" value="UniProtKB-SubCell"/>
</dbReference>
<dbReference type="GO" id="GO:0015297">
    <property type="term" value="F:antiporter activity"/>
    <property type="evidence" value="ECO:0007669"/>
    <property type="project" value="UniProtKB-UniRule"/>
</dbReference>
<dbReference type="GO" id="GO:0005247">
    <property type="term" value="F:voltage-gated chloride channel activity"/>
    <property type="evidence" value="ECO:0007669"/>
    <property type="project" value="TreeGrafter"/>
</dbReference>
<dbReference type="CDD" id="cd01031">
    <property type="entry name" value="EriC"/>
    <property type="match status" value="1"/>
</dbReference>
<dbReference type="FunFam" id="1.10.3080.10:FF:000005">
    <property type="entry name" value="H(+)/Cl(-) exchange transporter ClcA"/>
    <property type="match status" value="1"/>
</dbReference>
<dbReference type="Gene3D" id="1.10.3080.10">
    <property type="entry name" value="Clc chloride channel"/>
    <property type="match status" value="1"/>
</dbReference>
<dbReference type="HAMAP" id="MF_01128">
    <property type="entry name" value="CLC_ClcA"/>
    <property type="match status" value="1"/>
</dbReference>
<dbReference type="InterPro" id="IPR023861">
    <property type="entry name" value="Cl-channel_ClcA"/>
</dbReference>
<dbReference type="InterPro" id="IPR014743">
    <property type="entry name" value="Cl-channel_core"/>
</dbReference>
<dbReference type="InterPro" id="IPR001807">
    <property type="entry name" value="ClC"/>
</dbReference>
<dbReference type="NCBIfam" id="NF003640">
    <property type="entry name" value="PRK05277.1"/>
    <property type="match status" value="1"/>
</dbReference>
<dbReference type="PANTHER" id="PTHR45711">
    <property type="entry name" value="CHLORIDE CHANNEL PROTEIN"/>
    <property type="match status" value="1"/>
</dbReference>
<dbReference type="PANTHER" id="PTHR45711:SF6">
    <property type="entry name" value="CHLORIDE CHANNEL PROTEIN"/>
    <property type="match status" value="1"/>
</dbReference>
<dbReference type="Pfam" id="PF00654">
    <property type="entry name" value="Voltage_CLC"/>
    <property type="match status" value="1"/>
</dbReference>
<dbReference type="PRINTS" id="PR00762">
    <property type="entry name" value="CLCHANNEL"/>
</dbReference>
<dbReference type="SUPFAM" id="SSF81340">
    <property type="entry name" value="Clc chloride channel"/>
    <property type="match status" value="1"/>
</dbReference>
<accession>P59639</accession>
<evidence type="ECO:0000255" key="1">
    <source>
        <dbReference type="HAMAP-Rule" id="MF_01128"/>
    </source>
</evidence>
<evidence type="ECO:0000305" key="2"/>
<feature type="chain" id="PRO_0000094479" description="H(+)/Cl(-) exchange transporter ClcA">
    <location>
        <begin position="1"/>
        <end position="473"/>
    </location>
</feature>
<feature type="topological domain" description="Cytoplasmic" evidence="1">
    <location>
        <begin position="1"/>
        <end position="32"/>
    </location>
</feature>
<feature type="transmembrane region" description="Helical" evidence="1">
    <location>
        <begin position="33"/>
        <end position="69"/>
    </location>
</feature>
<feature type="topological domain" description="Periplasmic" evidence="1">
    <location>
        <begin position="70"/>
        <end position="76"/>
    </location>
</feature>
<feature type="transmembrane region" description="Helical" evidence="1">
    <location>
        <begin position="77"/>
        <end position="100"/>
    </location>
</feature>
<feature type="intramembrane region" description="Helical" evidence="1">
    <location>
        <begin position="109"/>
        <end position="116"/>
    </location>
</feature>
<feature type="topological domain" description="Cytoplasmic" evidence="1">
    <location>
        <begin position="117"/>
        <end position="123"/>
    </location>
</feature>
<feature type="transmembrane region" description="Helical" evidence="1">
    <location>
        <begin position="124"/>
        <end position="141"/>
    </location>
</feature>
<feature type="transmembrane region" description="Helical" evidence="1">
    <location>
        <begin position="148"/>
        <end position="166"/>
    </location>
</feature>
<feature type="topological domain" description="Cytoplasmic" evidence="1">
    <location>
        <begin position="167"/>
        <end position="176"/>
    </location>
</feature>
<feature type="intramembrane region" description="Helical" evidence="1">
    <location>
        <begin position="177"/>
        <end position="189"/>
    </location>
</feature>
<feature type="intramembrane region" description="Helical" evidence="1">
    <location>
        <begin position="193"/>
        <end position="201"/>
    </location>
</feature>
<feature type="topological domain" description="Cytoplasmic" evidence="1">
    <location>
        <begin position="202"/>
        <end position="214"/>
    </location>
</feature>
<feature type="transmembrane region" description="Helical" evidence="1">
    <location>
        <begin position="215"/>
        <end position="232"/>
    </location>
</feature>
<feature type="topological domain" description="Periplasmic" evidence="1">
    <location>
        <begin position="233"/>
        <end position="252"/>
    </location>
</feature>
<feature type="transmembrane region" description="Helical" evidence="1">
    <location>
        <begin position="253"/>
        <end position="281"/>
    </location>
</feature>
<feature type="topological domain" description="Cytoplasmic" evidence="1">
    <location>
        <begin position="282"/>
        <end position="287"/>
    </location>
</feature>
<feature type="transmembrane region" description="Helical" evidence="1">
    <location>
        <begin position="288"/>
        <end position="309"/>
    </location>
</feature>
<feature type="topological domain" description="Periplasmic" evidence="1">
    <location>
        <begin position="310"/>
        <end position="329"/>
    </location>
</feature>
<feature type="transmembrane region" description="Helical" evidence="1">
    <location>
        <begin position="330"/>
        <end position="349"/>
    </location>
</feature>
<feature type="transmembrane region" description="Helical" evidence="1">
    <location>
        <begin position="355"/>
        <end position="376"/>
    </location>
</feature>
<feature type="topological domain" description="Periplasmic" evidence="1">
    <location>
        <begin position="377"/>
        <end position="386"/>
    </location>
</feature>
<feature type="intramembrane region" description="Helical" evidence="1">
    <location>
        <begin position="387"/>
        <end position="401"/>
    </location>
</feature>
<feature type="intramembrane region" description="Note=Loop between two helices" evidence="1">
    <location>
        <begin position="402"/>
        <end position="404"/>
    </location>
</feature>
<feature type="intramembrane region" description="Helical" evidence="1">
    <location>
        <begin position="405"/>
        <end position="416"/>
    </location>
</feature>
<feature type="intramembrane region" description="Note=Loop between two helices" evidence="1">
    <location>
        <begin position="417"/>
        <end position="421"/>
    </location>
</feature>
<feature type="transmembrane region" description="Helical" evidence="1">
    <location>
        <begin position="422"/>
        <end position="438"/>
    </location>
</feature>
<feature type="topological domain" description="Cytoplasmic" evidence="1">
    <location>
        <begin position="439"/>
        <end position="473"/>
    </location>
</feature>
<feature type="short sequence motif" description="Selectivity filter part_1" evidence="1">
    <location>
        <begin position="106"/>
        <end position="110"/>
    </location>
</feature>
<feature type="short sequence motif" description="Selectivity filter part_2" evidence="1">
    <location>
        <begin position="146"/>
        <end position="150"/>
    </location>
</feature>
<feature type="short sequence motif" description="Selectivity filter part_3" evidence="1">
    <location>
        <begin position="355"/>
        <end position="359"/>
    </location>
</feature>
<feature type="binding site" evidence="1">
    <location>
        <position position="107"/>
    </location>
    <ligand>
        <name>chloride</name>
        <dbReference type="ChEBI" id="CHEBI:17996"/>
    </ligand>
</feature>
<feature type="binding site" evidence="1">
    <location>
        <position position="356"/>
    </location>
    <ligand>
        <name>chloride</name>
        <dbReference type="ChEBI" id="CHEBI:17996"/>
    </ligand>
</feature>
<feature type="binding site" evidence="1">
    <location>
        <position position="357"/>
    </location>
    <ligand>
        <name>chloride</name>
        <dbReference type="ChEBI" id="CHEBI:17996"/>
    </ligand>
</feature>
<feature type="binding site" evidence="1">
    <location>
        <position position="445"/>
    </location>
    <ligand>
        <name>chloride</name>
        <dbReference type="ChEBI" id="CHEBI:17996"/>
    </ligand>
</feature>
<feature type="site" description="Mediates proton transfer from the outer aqueous phase to the interior of the protein; involved in linking H(+) and Cl(-) transport" evidence="1">
    <location>
        <position position="148"/>
    </location>
</feature>
<feature type="site" description="Mediates proton transfer from the protein to the inner aqueous phase" evidence="1">
    <location>
        <position position="203"/>
    </location>
</feature>
<feature type="sequence conflict" description="In Ref. 2; AAP15691." evidence="2" ref="2">
    <original>P</original>
    <variation>Q</variation>
    <location>
        <position position="11"/>
    </location>
</feature>
<reference key="1">
    <citation type="journal article" date="2002" name="Nucleic Acids Res.">
        <title>Genome sequence of Shigella flexneri 2a: insights into pathogenicity through comparison with genomes of Escherichia coli K12 and O157.</title>
        <authorList>
            <person name="Jin Q."/>
            <person name="Yuan Z."/>
            <person name="Xu J."/>
            <person name="Wang Y."/>
            <person name="Shen Y."/>
            <person name="Lu W."/>
            <person name="Wang J."/>
            <person name="Liu H."/>
            <person name="Yang J."/>
            <person name="Yang F."/>
            <person name="Zhang X."/>
            <person name="Zhang J."/>
            <person name="Yang G."/>
            <person name="Wu H."/>
            <person name="Qu D."/>
            <person name="Dong J."/>
            <person name="Sun L."/>
            <person name="Xue Y."/>
            <person name="Zhao A."/>
            <person name="Gao Y."/>
            <person name="Zhu J."/>
            <person name="Kan B."/>
            <person name="Ding K."/>
            <person name="Chen S."/>
            <person name="Cheng H."/>
            <person name="Yao Z."/>
            <person name="He B."/>
            <person name="Chen R."/>
            <person name="Ma D."/>
            <person name="Qiang B."/>
            <person name="Wen Y."/>
            <person name="Hou Y."/>
            <person name="Yu J."/>
        </authorList>
    </citation>
    <scope>NUCLEOTIDE SEQUENCE [LARGE SCALE GENOMIC DNA]</scope>
    <source>
        <strain>301 / Serotype 2a</strain>
    </source>
</reference>
<reference key="2">
    <citation type="journal article" date="2003" name="Infect. Immun.">
        <title>Complete genome sequence and comparative genomics of Shigella flexneri serotype 2a strain 2457T.</title>
        <authorList>
            <person name="Wei J."/>
            <person name="Goldberg M.B."/>
            <person name="Burland V."/>
            <person name="Venkatesan M.M."/>
            <person name="Deng W."/>
            <person name="Fournier G."/>
            <person name="Mayhew G.F."/>
            <person name="Plunkett G. III"/>
            <person name="Rose D.J."/>
            <person name="Darling A."/>
            <person name="Mau B."/>
            <person name="Perna N.T."/>
            <person name="Payne S.M."/>
            <person name="Runyen-Janecky L.J."/>
            <person name="Zhou S."/>
            <person name="Schwartz D.C."/>
            <person name="Blattner F.R."/>
        </authorList>
    </citation>
    <scope>NUCLEOTIDE SEQUENCE [LARGE SCALE GENOMIC DNA]</scope>
    <source>
        <strain>ATCC 700930 / 2457T / Serotype 2a</strain>
    </source>
</reference>
<name>CLCA_SHIFL</name>
<proteinExistence type="inferred from homology"/>